<protein>
    <recommendedName>
        <fullName evidence="1">Ribonuclease HII</fullName>
        <shortName evidence="1">RNase HII</shortName>
        <ecNumber evidence="1">3.1.26.4</ecNumber>
    </recommendedName>
</protein>
<evidence type="ECO:0000255" key="1">
    <source>
        <dbReference type="HAMAP-Rule" id="MF_00052"/>
    </source>
</evidence>
<evidence type="ECO:0000255" key="2">
    <source>
        <dbReference type="PROSITE-ProRule" id="PRU01319"/>
    </source>
</evidence>
<comment type="function">
    <text evidence="1">Endonuclease that specifically degrades the RNA of RNA-DNA hybrids.</text>
</comment>
<comment type="catalytic activity">
    <reaction evidence="1">
        <text>Endonucleolytic cleavage to 5'-phosphomonoester.</text>
        <dbReference type="EC" id="3.1.26.4"/>
    </reaction>
</comment>
<comment type="cofactor">
    <cofactor evidence="1">
        <name>Mn(2+)</name>
        <dbReference type="ChEBI" id="CHEBI:29035"/>
    </cofactor>
    <cofactor evidence="1">
        <name>Mg(2+)</name>
        <dbReference type="ChEBI" id="CHEBI:18420"/>
    </cofactor>
    <text evidence="1">Manganese or magnesium. Binds 1 divalent metal ion per monomer in the absence of substrate. May bind a second metal ion after substrate binding.</text>
</comment>
<comment type="subcellular location">
    <subcellularLocation>
        <location evidence="1">Cytoplasm</location>
    </subcellularLocation>
</comment>
<comment type="similarity">
    <text evidence="1">Belongs to the RNase HII family.</text>
</comment>
<name>RNH2_SHIF8</name>
<reference key="1">
    <citation type="journal article" date="2006" name="BMC Genomics">
        <title>Complete genome sequence of Shigella flexneri 5b and comparison with Shigella flexneri 2a.</title>
        <authorList>
            <person name="Nie H."/>
            <person name="Yang F."/>
            <person name="Zhang X."/>
            <person name="Yang J."/>
            <person name="Chen L."/>
            <person name="Wang J."/>
            <person name="Xiong Z."/>
            <person name="Peng J."/>
            <person name="Sun L."/>
            <person name="Dong J."/>
            <person name="Xue Y."/>
            <person name="Xu X."/>
            <person name="Chen S."/>
            <person name="Yao Z."/>
            <person name="Shen Y."/>
            <person name="Jin Q."/>
        </authorList>
    </citation>
    <scope>NUCLEOTIDE SEQUENCE [LARGE SCALE GENOMIC DNA]</scope>
    <source>
        <strain>8401</strain>
    </source>
</reference>
<gene>
    <name evidence="1" type="primary">rnhB</name>
    <name type="ordered locus">SFV_0166</name>
</gene>
<dbReference type="EC" id="3.1.26.4" evidence="1"/>
<dbReference type="EMBL" id="CP000266">
    <property type="protein sequence ID" value="ABF02450.1"/>
    <property type="molecule type" value="Genomic_DNA"/>
</dbReference>
<dbReference type="RefSeq" id="WP_000569431.1">
    <property type="nucleotide sequence ID" value="NC_008258.1"/>
</dbReference>
<dbReference type="SMR" id="Q0T826"/>
<dbReference type="KEGG" id="sfv:SFV_0166"/>
<dbReference type="HOGENOM" id="CLU_036532_3_2_6"/>
<dbReference type="Proteomes" id="UP000000659">
    <property type="component" value="Chromosome"/>
</dbReference>
<dbReference type="GO" id="GO:0005737">
    <property type="term" value="C:cytoplasm"/>
    <property type="evidence" value="ECO:0007669"/>
    <property type="project" value="UniProtKB-SubCell"/>
</dbReference>
<dbReference type="GO" id="GO:0032299">
    <property type="term" value="C:ribonuclease H2 complex"/>
    <property type="evidence" value="ECO:0007669"/>
    <property type="project" value="TreeGrafter"/>
</dbReference>
<dbReference type="GO" id="GO:0030145">
    <property type="term" value="F:manganese ion binding"/>
    <property type="evidence" value="ECO:0007669"/>
    <property type="project" value="UniProtKB-UniRule"/>
</dbReference>
<dbReference type="GO" id="GO:0003723">
    <property type="term" value="F:RNA binding"/>
    <property type="evidence" value="ECO:0007669"/>
    <property type="project" value="InterPro"/>
</dbReference>
<dbReference type="GO" id="GO:0004523">
    <property type="term" value="F:RNA-DNA hybrid ribonuclease activity"/>
    <property type="evidence" value="ECO:0007669"/>
    <property type="project" value="UniProtKB-UniRule"/>
</dbReference>
<dbReference type="GO" id="GO:0043137">
    <property type="term" value="P:DNA replication, removal of RNA primer"/>
    <property type="evidence" value="ECO:0007669"/>
    <property type="project" value="TreeGrafter"/>
</dbReference>
<dbReference type="GO" id="GO:0006298">
    <property type="term" value="P:mismatch repair"/>
    <property type="evidence" value="ECO:0007669"/>
    <property type="project" value="TreeGrafter"/>
</dbReference>
<dbReference type="CDD" id="cd07182">
    <property type="entry name" value="RNase_HII_bacteria_HII_like"/>
    <property type="match status" value="1"/>
</dbReference>
<dbReference type="FunFam" id="3.30.420.10:FF:000006">
    <property type="entry name" value="Ribonuclease HII"/>
    <property type="match status" value="1"/>
</dbReference>
<dbReference type="Gene3D" id="3.30.420.10">
    <property type="entry name" value="Ribonuclease H-like superfamily/Ribonuclease H"/>
    <property type="match status" value="1"/>
</dbReference>
<dbReference type="HAMAP" id="MF_00052_B">
    <property type="entry name" value="RNase_HII_B"/>
    <property type="match status" value="1"/>
</dbReference>
<dbReference type="InterPro" id="IPR022898">
    <property type="entry name" value="RNase_HII"/>
</dbReference>
<dbReference type="InterPro" id="IPR001352">
    <property type="entry name" value="RNase_HII/HIII"/>
</dbReference>
<dbReference type="InterPro" id="IPR024567">
    <property type="entry name" value="RNase_HII/HIII_dom"/>
</dbReference>
<dbReference type="InterPro" id="IPR012337">
    <property type="entry name" value="RNaseH-like_sf"/>
</dbReference>
<dbReference type="InterPro" id="IPR036397">
    <property type="entry name" value="RNaseH_sf"/>
</dbReference>
<dbReference type="NCBIfam" id="NF000594">
    <property type="entry name" value="PRK00015.1-1"/>
    <property type="match status" value="1"/>
</dbReference>
<dbReference type="NCBIfam" id="NF000595">
    <property type="entry name" value="PRK00015.1-3"/>
    <property type="match status" value="1"/>
</dbReference>
<dbReference type="NCBIfam" id="NF000596">
    <property type="entry name" value="PRK00015.1-4"/>
    <property type="match status" value="1"/>
</dbReference>
<dbReference type="PANTHER" id="PTHR10954">
    <property type="entry name" value="RIBONUCLEASE H2 SUBUNIT A"/>
    <property type="match status" value="1"/>
</dbReference>
<dbReference type="PANTHER" id="PTHR10954:SF18">
    <property type="entry name" value="RIBONUCLEASE HII"/>
    <property type="match status" value="1"/>
</dbReference>
<dbReference type="Pfam" id="PF01351">
    <property type="entry name" value="RNase_HII"/>
    <property type="match status" value="1"/>
</dbReference>
<dbReference type="SUPFAM" id="SSF53098">
    <property type="entry name" value="Ribonuclease H-like"/>
    <property type="match status" value="1"/>
</dbReference>
<dbReference type="PROSITE" id="PS51975">
    <property type="entry name" value="RNASE_H_2"/>
    <property type="match status" value="1"/>
</dbReference>
<organism>
    <name type="scientific">Shigella flexneri serotype 5b (strain 8401)</name>
    <dbReference type="NCBI Taxonomy" id="373384"/>
    <lineage>
        <taxon>Bacteria</taxon>
        <taxon>Pseudomonadati</taxon>
        <taxon>Pseudomonadota</taxon>
        <taxon>Gammaproteobacteria</taxon>
        <taxon>Enterobacterales</taxon>
        <taxon>Enterobacteriaceae</taxon>
        <taxon>Shigella</taxon>
    </lineage>
</organism>
<proteinExistence type="inferred from homology"/>
<feature type="chain" id="PRO_1000031206" description="Ribonuclease HII">
    <location>
        <begin position="1"/>
        <end position="198"/>
    </location>
</feature>
<feature type="domain" description="RNase H type-2" evidence="2">
    <location>
        <begin position="10"/>
        <end position="198"/>
    </location>
</feature>
<feature type="binding site" evidence="1">
    <location>
        <position position="16"/>
    </location>
    <ligand>
        <name>a divalent metal cation</name>
        <dbReference type="ChEBI" id="CHEBI:60240"/>
    </ligand>
</feature>
<feature type="binding site" evidence="1">
    <location>
        <position position="17"/>
    </location>
    <ligand>
        <name>a divalent metal cation</name>
        <dbReference type="ChEBI" id="CHEBI:60240"/>
    </ligand>
</feature>
<feature type="binding site" evidence="1">
    <location>
        <position position="108"/>
    </location>
    <ligand>
        <name>a divalent metal cation</name>
        <dbReference type="ChEBI" id="CHEBI:60240"/>
    </ligand>
</feature>
<accession>Q0T826</accession>
<keyword id="KW-0963">Cytoplasm</keyword>
<keyword id="KW-0255">Endonuclease</keyword>
<keyword id="KW-0378">Hydrolase</keyword>
<keyword id="KW-0464">Manganese</keyword>
<keyword id="KW-0479">Metal-binding</keyword>
<keyword id="KW-0540">Nuclease</keyword>
<sequence>MIEFVYPHTQLVAGVDEVGRGPLVGAVVTAAVILDPARPIAGLNDSKKLSEKRRLALYEEIKEKALSWSLGRAEPHEIDELNILHATMLAMQRAVAGLHIAPEYVLIDGNRCPKLPMPAMAVVKGDSRVPEISAASILAKVTRDAEMAALDIVFPQYGFAQHKGYPTAFHLEKLAEYGATEHHRRSFGPVKRALGLAS</sequence>